<keyword id="KW-0028">Amino-acid biosynthesis</keyword>
<keyword id="KW-0067">ATP-binding</keyword>
<keyword id="KW-0418">Kinase</keyword>
<keyword id="KW-0486">Methionine biosynthesis</keyword>
<keyword id="KW-0547">Nucleotide-binding</keyword>
<keyword id="KW-0808">Transferase</keyword>
<accession>C3P742</accession>
<evidence type="ECO:0000255" key="1">
    <source>
        <dbReference type="HAMAP-Rule" id="MF_01683"/>
    </source>
</evidence>
<dbReference type="EC" id="2.7.1.100" evidence="1"/>
<dbReference type="EMBL" id="CP001598">
    <property type="protein sequence ID" value="ACQ48149.1"/>
    <property type="molecule type" value="Genomic_DNA"/>
</dbReference>
<dbReference type="RefSeq" id="WP_000542711.1">
    <property type="nucleotide sequence ID" value="NC_012659.1"/>
</dbReference>
<dbReference type="SMR" id="C3P742"/>
<dbReference type="GeneID" id="45023923"/>
<dbReference type="KEGG" id="bai:BAA_4273"/>
<dbReference type="HOGENOM" id="CLU_033681_0_0_9"/>
<dbReference type="UniPathway" id="UPA00904">
    <property type="reaction ID" value="UER00872"/>
</dbReference>
<dbReference type="GO" id="GO:0005524">
    <property type="term" value="F:ATP binding"/>
    <property type="evidence" value="ECO:0007669"/>
    <property type="project" value="UniProtKB-UniRule"/>
</dbReference>
<dbReference type="GO" id="GO:0046522">
    <property type="term" value="F:S-methyl-5-thioribose kinase activity"/>
    <property type="evidence" value="ECO:0007669"/>
    <property type="project" value="UniProtKB-UniRule"/>
</dbReference>
<dbReference type="GO" id="GO:0019509">
    <property type="term" value="P:L-methionine salvage from methylthioadenosine"/>
    <property type="evidence" value="ECO:0007669"/>
    <property type="project" value="UniProtKB-UniRule"/>
</dbReference>
<dbReference type="FunFam" id="3.30.200.20:FF:000436">
    <property type="entry name" value="Methylthioribose kinase"/>
    <property type="match status" value="1"/>
</dbReference>
<dbReference type="FunFam" id="3.90.1200.10:FF:000008">
    <property type="entry name" value="Methylthioribose kinase"/>
    <property type="match status" value="1"/>
</dbReference>
<dbReference type="Gene3D" id="3.90.1200.10">
    <property type="match status" value="1"/>
</dbReference>
<dbReference type="Gene3D" id="3.30.200.20">
    <property type="entry name" value="Phosphorylase Kinase, domain 1"/>
    <property type="match status" value="1"/>
</dbReference>
<dbReference type="HAMAP" id="MF_01683">
    <property type="entry name" value="Salvage_MtnK"/>
    <property type="match status" value="1"/>
</dbReference>
<dbReference type="InterPro" id="IPR002575">
    <property type="entry name" value="Aminoglycoside_PTrfase"/>
</dbReference>
<dbReference type="InterPro" id="IPR011009">
    <property type="entry name" value="Kinase-like_dom_sf"/>
</dbReference>
<dbReference type="InterPro" id="IPR009212">
    <property type="entry name" value="Methylthioribose_kinase"/>
</dbReference>
<dbReference type="NCBIfam" id="TIGR01767">
    <property type="entry name" value="MTRK"/>
    <property type="match status" value="1"/>
</dbReference>
<dbReference type="PANTHER" id="PTHR34273">
    <property type="entry name" value="METHYLTHIORIBOSE KINASE"/>
    <property type="match status" value="1"/>
</dbReference>
<dbReference type="PANTHER" id="PTHR34273:SF2">
    <property type="entry name" value="METHYLTHIORIBOSE KINASE"/>
    <property type="match status" value="1"/>
</dbReference>
<dbReference type="Pfam" id="PF01636">
    <property type="entry name" value="APH"/>
    <property type="match status" value="1"/>
</dbReference>
<dbReference type="PIRSF" id="PIRSF031134">
    <property type="entry name" value="MTRK"/>
    <property type="match status" value="1"/>
</dbReference>
<dbReference type="SUPFAM" id="SSF56112">
    <property type="entry name" value="Protein kinase-like (PK-like)"/>
    <property type="match status" value="1"/>
</dbReference>
<protein>
    <recommendedName>
        <fullName evidence="1">Methylthioribose kinase</fullName>
        <shortName evidence="1">MTR kinase</shortName>
        <ecNumber evidence="1">2.7.1.100</ecNumber>
    </recommendedName>
</protein>
<comment type="function">
    <text evidence="1">Catalyzes the phosphorylation of methylthioribose into methylthioribose-1-phosphate.</text>
</comment>
<comment type="catalytic activity">
    <reaction evidence="1">
        <text>5-(methylsulfanyl)-D-ribose + ATP = 5-(methylsulfanyl)-alpha-D-ribose 1-phosphate + ADP + H(+)</text>
        <dbReference type="Rhea" id="RHEA:22312"/>
        <dbReference type="ChEBI" id="CHEBI:15378"/>
        <dbReference type="ChEBI" id="CHEBI:30616"/>
        <dbReference type="ChEBI" id="CHEBI:58533"/>
        <dbReference type="ChEBI" id="CHEBI:78440"/>
        <dbReference type="ChEBI" id="CHEBI:456216"/>
        <dbReference type="EC" id="2.7.1.100"/>
    </reaction>
</comment>
<comment type="pathway">
    <text evidence="1">Amino-acid biosynthesis; L-methionine biosynthesis via salvage pathway; S-methyl-5-thio-alpha-D-ribose 1-phosphate from S-methyl-5'-thioadenosine (hydrolase route): step 2/2.</text>
</comment>
<comment type="subunit">
    <text evidence="1">Homodimer.</text>
</comment>
<comment type="similarity">
    <text evidence="1">Belongs to the methylthioribose kinase family.</text>
</comment>
<name>MTNK_BACAA</name>
<proteinExistence type="inferred from homology"/>
<organism>
    <name type="scientific">Bacillus anthracis (strain A0248)</name>
    <dbReference type="NCBI Taxonomy" id="592021"/>
    <lineage>
        <taxon>Bacteria</taxon>
        <taxon>Bacillati</taxon>
        <taxon>Bacillota</taxon>
        <taxon>Bacilli</taxon>
        <taxon>Bacillales</taxon>
        <taxon>Bacillaceae</taxon>
        <taxon>Bacillus</taxon>
        <taxon>Bacillus cereus group</taxon>
    </lineage>
</organism>
<reference key="1">
    <citation type="submission" date="2009-04" db="EMBL/GenBank/DDBJ databases">
        <title>Genome sequence of Bacillus anthracis A0248.</title>
        <authorList>
            <person name="Dodson R.J."/>
            <person name="Munk A.C."/>
            <person name="Bruce D."/>
            <person name="Detter C."/>
            <person name="Tapia R."/>
            <person name="Sutton G."/>
            <person name="Sims D."/>
            <person name="Brettin T."/>
        </authorList>
    </citation>
    <scope>NUCLEOTIDE SEQUENCE [LARGE SCALE GENOMIC DNA]</scope>
    <source>
        <strain>A0248</strain>
    </source>
</reference>
<gene>
    <name evidence="1" type="primary">mtnK</name>
    <name type="ordered locus">BAA_4273</name>
</gene>
<feature type="chain" id="PRO_1000187396" description="Methylthioribose kinase">
    <location>
        <begin position="1"/>
        <end position="393"/>
    </location>
</feature>
<feature type="binding site" evidence="1">
    <location>
        <position position="38"/>
    </location>
    <ligand>
        <name>ATP</name>
        <dbReference type="ChEBI" id="CHEBI:30616"/>
    </ligand>
</feature>
<feature type="binding site" evidence="1">
    <location>
        <position position="53"/>
    </location>
    <ligand>
        <name>ATP</name>
        <dbReference type="ChEBI" id="CHEBI:30616"/>
    </ligand>
</feature>
<feature type="binding site" evidence="1">
    <location>
        <begin position="107"/>
        <end position="109"/>
    </location>
    <ligand>
        <name>ATP</name>
        <dbReference type="ChEBI" id="CHEBI:30616"/>
    </ligand>
</feature>
<feature type="binding site" evidence="1">
    <location>
        <position position="225"/>
    </location>
    <ligand>
        <name>substrate</name>
    </ligand>
</feature>
<feature type="binding site" evidence="1">
    <location>
        <begin position="242"/>
        <end position="244"/>
    </location>
    <ligand>
        <name>ATP</name>
        <dbReference type="ChEBI" id="CHEBI:30616"/>
    </ligand>
</feature>
<feature type="binding site" evidence="1">
    <location>
        <position position="332"/>
    </location>
    <ligand>
        <name>substrate</name>
    </ligand>
</feature>
<sequence length="393" mass="44779">MGYYSLTEVTAVQYAKEHGYFEKKANVVCHEIGDGNLNYVFKLDDGEKSIIIKQALPYAKVVGESWPLSIKRATIESKALQIFAKYVPEYVPVVYSHDEELAVTVIEDLSRLTITRKGLIDGEEYPLLSQHIGRFLANVLFYTSDFGLQSEEKRVLEGTFVNPDLCKITEDLVFTDPFGHYDTNDYEPELQLTIDELWSDKTLKLKVAQYKYKFLTRKEALIHGDLHTGSIFSSPSETKVIDPEFATYGPFGFDIGQFIANLLLNALSREEEQRGVLFFHIEKTWSYFVETFTKLWIGEGVEAYTKEKQWLPIILQNIFTDAVGFAGCELIRRTIGLAHVADLDEITNKETRIQAKKQALSLGKELIKYESKNADIQLFRTLFQQTVSGGIKA</sequence>